<feature type="chain" id="PRO_1000082810" description="Ribosomal RNA large subunit methyltransferase H">
    <location>
        <begin position="1"/>
        <end position="155"/>
    </location>
</feature>
<feature type="binding site" evidence="1">
    <location>
        <position position="73"/>
    </location>
    <ligand>
        <name>S-adenosyl-L-methionine</name>
        <dbReference type="ChEBI" id="CHEBI:59789"/>
    </ligand>
</feature>
<feature type="binding site" evidence="1">
    <location>
        <position position="104"/>
    </location>
    <ligand>
        <name>S-adenosyl-L-methionine</name>
        <dbReference type="ChEBI" id="CHEBI:59789"/>
    </ligand>
</feature>
<feature type="binding site" evidence="1">
    <location>
        <begin position="123"/>
        <end position="128"/>
    </location>
    <ligand>
        <name>S-adenosyl-L-methionine</name>
        <dbReference type="ChEBI" id="CHEBI:59789"/>
    </ligand>
</feature>
<dbReference type="EC" id="2.1.1.177" evidence="1"/>
<dbReference type="EMBL" id="CP000926">
    <property type="protein sequence ID" value="ABZ00746.1"/>
    <property type="molecule type" value="Genomic_DNA"/>
</dbReference>
<dbReference type="RefSeq" id="WP_012274378.1">
    <property type="nucleotide sequence ID" value="NC_010322.1"/>
</dbReference>
<dbReference type="SMR" id="B0KJY2"/>
<dbReference type="KEGG" id="ppg:PputGB1_4861"/>
<dbReference type="eggNOG" id="COG1576">
    <property type="taxonomic scope" value="Bacteria"/>
</dbReference>
<dbReference type="HOGENOM" id="CLU_100552_1_0_6"/>
<dbReference type="Proteomes" id="UP000002157">
    <property type="component" value="Chromosome"/>
</dbReference>
<dbReference type="GO" id="GO:0005737">
    <property type="term" value="C:cytoplasm"/>
    <property type="evidence" value="ECO:0007669"/>
    <property type="project" value="UniProtKB-SubCell"/>
</dbReference>
<dbReference type="GO" id="GO:0070038">
    <property type="term" value="F:rRNA (pseudouridine-N3-)-methyltransferase activity"/>
    <property type="evidence" value="ECO:0007669"/>
    <property type="project" value="UniProtKB-UniRule"/>
</dbReference>
<dbReference type="CDD" id="cd18081">
    <property type="entry name" value="RlmH-like"/>
    <property type="match status" value="1"/>
</dbReference>
<dbReference type="Gene3D" id="3.40.1280.10">
    <property type="match status" value="1"/>
</dbReference>
<dbReference type="HAMAP" id="MF_00658">
    <property type="entry name" value="23SrRNA_methyltr_H"/>
    <property type="match status" value="1"/>
</dbReference>
<dbReference type="InterPro" id="IPR029028">
    <property type="entry name" value="Alpha/beta_knot_MTases"/>
</dbReference>
<dbReference type="InterPro" id="IPR003742">
    <property type="entry name" value="RlmH-like"/>
</dbReference>
<dbReference type="InterPro" id="IPR029026">
    <property type="entry name" value="tRNA_m1G_MTases_N"/>
</dbReference>
<dbReference type="NCBIfam" id="NF000986">
    <property type="entry name" value="PRK00103.1-4"/>
    <property type="match status" value="1"/>
</dbReference>
<dbReference type="NCBIfam" id="TIGR00246">
    <property type="entry name" value="tRNA_RlmH_YbeA"/>
    <property type="match status" value="1"/>
</dbReference>
<dbReference type="PANTHER" id="PTHR33603">
    <property type="entry name" value="METHYLTRANSFERASE"/>
    <property type="match status" value="1"/>
</dbReference>
<dbReference type="PANTHER" id="PTHR33603:SF1">
    <property type="entry name" value="RIBOSOMAL RNA LARGE SUBUNIT METHYLTRANSFERASE H"/>
    <property type="match status" value="1"/>
</dbReference>
<dbReference type="Pfam" id="PF02590">
    <property type="entry name" value="SPOUT_MTase"/>
    <property type="match status" value="1"/>
</dbReference>
<dbReference type="PIRSF" id="PIRSF004505">
    <property type="entry name" value="MT_bac"/>
    <property type="match status" value="1"/>
</dbReference>
<dbReference type="SUPFAM" id="SSF75217">
    <property type="entry name" value="alpha/beta knot"/>
    <property type="match status" value="1"/>
</dbReference>
<gene>
    <name evidence="1" type="primary">rlmH</name>
    <name type="ordered locus">PputGB1_4861</name>
</gene>
<proteinExistence type="inferred from homology"/>
<accession>B0KJY2</accession>
<protein>
    <recommendedName>
        <fullName evidence="1">Ribosomal RNA large subunit methyltransferase H</fullName>
        <ecNumber evidence="1">2.1.1.177</ecNumber>
    </recommendedName>
    <alternativeName>
        <fullName evidence="1">23S rRNA (pseudouridine1915-N3)-methyltransferase</fullName>
    </alternativeName>
    <alternativeName>
        <fullName evidence="1">23S rRNA m3Psi1915 methyltransferase</fullName>
    </alternativeName>
    <alternativeName>
        <fullName evidence="1">rRNA (pseudouridine-N3-)-methyltransferase RlmH</fullName>
    </alternativeName>
</protein>
<comment type="function">
    <text evidence="1">Specifically methylates the pseudouridine at position 1915 (m3Psi1915) in 23S rRNA.</text>
</comment>
<comment type="catalytic activity">
    <reaction evidence="1">
        <text>pseudouridine(1915) in 23S rRNA + S-adenosyl-L-methionine = N(3)-methylpseudouridine(1915) in 23S rRNA + S-adenosyl-L-homocysteine + H(+)</text>
        <dbReference type="Rhea" id="RHEA:42752"/>
        <dbReference type="Rhea" id="RHEA-COMP:10221"/>
        <dbReference type="Rhea" id="RHEA-COMP:10222"/>
        <dbReference type="ChEBI" id="CHEBI:15378"/>
        <dbReference type="ChEBI" id="CHEBI:57856"/>
        <dbReference type="ChEBI" id="CHEBI:59789"/>
        <dbReference type="ChEBI" id="CHEBI:65314"/>
        <dbReference type="ChEBI" id="CHEBI:74486"/>
        <dbReference type="EC" id="2.1.1.177"/>
    </reaction>
</comment>
<comment type="subunit">
    <text evidence="1">Homodimer.</text>
</comment>
<comment type="subcellular location">
    <subcellularLocation>
        <location evidence="1">Cytoplasm</location>
    </subcellularLocation>
</comment>
<comment type="similarity">
    <text evidence="1">Belongs to the RNA methyltransferase RlmH family.</text>
</comment>
<organism>
    <name type="scientific">Pseudomonas putida (strain GB-1)</name>
    <dbReference type="NCBI Taxonomy" id="76869"/>
    <lineage>
        <taxon>Bacteria</taxon>
        <taxon>Pseudomonadati</taxon>
        <taxon>Pseudomonadota</taxon>
        <taxon>Gammaproteobacteria</taxon>
        <taxon>Pseudomonadales</taxon>
        <taxon>Pseudomonadaceae</taxon>
        <taxon>Pseudomonas</taxon>
    </lineage>
</organism>
<evidence type="ECO:0000255" key="1">
    <source>
        <dbReference type="HAMAP-Rule" id="MF_00658"/>
    </source>
</evidence>
<reference key="1">
    <citation type="submission" date="2008-01" db="EMBL/GenBank/DDBJ databases">
        <title>Complete sequence of Pseudomonas putida GB-1.</title>
        <authorList>
            <consortium name="US DOE Joint Genome Institute"/>
            <person name="Copeland A."/>
            <person name="Lucas S."/>
            <person name="Lapidus A."/>
            <person name="Barry K."/>
            <person name="Glavina del Rio T."/>
            <person name="Dalin E."/>
            <person name="Tice H."/>
            <person name="Pitluck S."/>
            <person name="Bruce D."/>
            <person name="Goodwin L."/>
            <person name="Chertkov O."/>
            <person name="Brettin T."/>
            <person name="Detter J.C."/>
            <person name="Han C."/>
            <person name="Kuske C.R."/>
            <person name="Schmutz J."/>
            <person name="Larimer F."/>
            <person name="Land M."/>
            <person name="Hauser L."/>
            <person name="Kyrpides N."/>
            <person name="Kim E."/>
            <person name="McCarthy J.K."/>
            <person name="Richardson P."/>
        </authorList>
    </citation>
    <scope>NUCLEOTIDE SEQUENCE [LARGE SCALE GENOMIC DNA]</scope>
    <source>
        <strain>GB-1</strain>
    </source>
</reference>
<name>RLMH_PSEPG</name>
<sequence length="155" mass="17699">MRLRLIAVGSRMPKWVEEGWHEYAKRLPTELSLELVEIPLNTRGKNADVARLIRQEGEAMLSKVQPGERIVTLEVHGKPWSTEQLATELDRWRLDARTVNLMVGGPEGLAPEVCARAEQRWSLSPLTLPHPLVRILIGEQIYRAWTVLSGHPYHK</sequence>
<keyword id="KW-0963">Cytoplasm</keyword>
<keyword id="KW-0489">Methyltransferase</keyword>
<keyword id="KW-0698">rRNA processing</keyword>
<keyword id="KW-0949">S-adenosyl-L-methionine</keyword>
<keyword id="KW-0808">Transferase</keyword>